<sequence length="96" mass="10854">MAEARSKISFEDALVELEQIAEKLERQDFSLEESLKAYERGMELKKICRGILDSAEGKIEALTKDESQKTNKTGFRTESKSTSQTSSDSVLEEDLF</sequence>
<evidence type="ECO:0000255" key="1">
    <source>
        <dbReference type="HAMAP-Rule" id="MF_00337"/>
    </source>
</evidence>
<evidence type="ECO:0000256" key="2">
    <source>
        <dbReference type="SAM" id="MobiDB-lite"/>
    </source>
</evidence>
<organism>
    <name type="scientific">Leptospira borgpetersenii serovar Hardjo-bovis (strain L550)</name>
    <dbReference type="NCBI Taxonomy" id="355276"/>
    <lineage>
        <taxon>Bacteria</taxon>
        <taxon>Pseudomonadati</taxon>
        <taxon>Spirochaetota</taxon>
        <taxon>Spirochaetia</taxon>
        <taxon>Leptospirales</taxon>
        <taxon>Leptospiraceae</taxon>
        <taxon>Leptospira</taxon>
    </lineage>
</organism>
<gene>
    <name evidence="1" type="primary">xseB</name>
    <name type="ordered locus">LBL_1498</name>
</gene>
<keyword id="KW-0963">Cytoplasm</keyword>
<keyword id="KW-0269">Exonuclease</keyword>
<keyword id="KW-0378">Hydrolase</keyword>
<keyword id="KW-0540">Nuclease</keyword>
<reference key="1">
    <citation type="journal article" date="2006" name="Proc. Natl. Acad. Sci. U.S.A.">
        <title>Genome reduction in Leptospira borgpetersenii reflects limited transmission potential.</title>
        <authorList>
            <person name="Bulach D.M."/>
            <person name="Zuerner R.L."/>
            <person name="Wilson P."/>
            <person name="Seemann T."/>
            <person name="McGrath A."/>
            <person name="Cullen P.A."/>
            <person name="Davis J."/>
            <person name="Johnson M."/>
            <person name="Kuczek E."/>
            <person name="Alt D.P."/>
            <person name="Peterson-Burch B."/>
            <person name="Coppel R.L."/>
            <person name="Rood J.I."/>
            <person name="Davies J.K."/>
            <person name="Adler B."/>
        </authorList>
    </citation>
    <scope>NUCLEOTIDE SEQUENCE [LARGE SCALE GENOMIC DNA]</scope>
    <source>
        <strain>L550</strain>
    </source>
</reference>
<proteinExistence type="inferred from homology"/>
<feature type="chain" id="PRO_0000303721" description="Exodeoxyribonuclease 7 small subunit">
    <location>
        <begin position="1"/>
        <end position="96"/>
    </location>
</feature>
<feature type="region of interest" description="Disordered" evidence="2">
    <location>
        <begin position="61"/>
        <end position="96"/>
    </location>
</feature>
<feature type="compositionally biased region" description="Basic and acidic residues" evidence="2">
    <location>
        <begin position="61"/>
        <end position="79"/>
    </location>
</feature>
<feature type="compositionally biased region" description="Low complexity" evidence="2">
    <location>
        <begin position="80"/>
        <end position="89"/>
    </location>
</feature>
<name>EX7S_LEPBL</name>
<dbReference type="EC" id="3.1.11.6" evidence="1"/>
<dbReference type="EMBL" id="CP000348">
    <property type="protein sequence ID" value="ABJ78961.1"/>
    <property type="molecule type" value="Genomic_DNA"/>
</dbReference>
<dbReference type="RefSeq" id="WP_002728555.1">
    <property type="nucleotide sequence ID" value="NC_008508.1"/>
</dbReference>
<dbReference type="SMR" id="Q051N4"/>
<dbReference type="KEGG" id="lbl:LBL_1498"/>
<dbReference type="HOGENOM" id="CLU_145918_3_1_12"/>
<dbReference type="GO" id="GO:0005829">
    <property type="term" value="C:cytosol"/>
    <property type="evidence" value="ECO:0007669"/>
    <property type="project" value="TreeGrafter"/>
</dbReference>
<dbReference type="GO" id="GO:0009318">
    <property type="term" value="C:exodeoxyribonuclease VII complex"/>
    <property type="evidence" value="ECO:0007669"/>
    <property type="project" value="InterPro"/>
</dbReference>
<dbReference type="GO" id="GO:0008855">
    <property type="term" value="F:exodeoxyribonuclease VII activity"/>
    <property type="evidence" value="ECO:0007669"/>
    <property type="project" value="UniProtKB-UniRule"/>
</dbReference>
<dbReference type="GO" id="GO:0006308">
    <property type="term" value="P:DNA catabolic process"/>
    <property type="evidence" value="ECO:0007669"/>
    <property type="project" value="UniProtKB-UniRule"/>
</dbReference>
<dbReference type="Gene3D" id="1.10.287.1040">
    <property type="entry name" value="Exonuclease VII, small subunit"/>
    <property type="match status" value="1"/>
</dbReference>
<dbReference type="HAMAP" id="MF_00337">
    <property type="entry name" value="Exonuc_7_S"/>
    <property type="match status" value="1"/>
</dbReference>
<dbReference type="InterPro" id="IPR003761">
    <property type="entry name" value="Exonuc_VII_S"/>
</dbReference>
<dbReference type="InterPro" id="IPR037004">
    <property type="entry name" value="Exonuc_VII_ssu_sf"/>
</dbReference>
<dbReference type="NCBIfam" id="NF002140">
    <property type="entry name" value="PRK00977.1-4"/>
    <property type="match status" value="1"/>
</dbReference>
<dbReference type="NCBIfam" id="NF010672">
    <property type="entry name" value="PRK14069.1"/>
    <property type="match status" value="1"/>
</dbReference>
<dbReference type="NCBIfam" id="TIGR01280">
    <property type="entry name" value="xseB"/>
    <property type="match status" value="1"/>
</dbReference>
<dbReference type="PANTHER" id="PTHR34137">
    <property type="entry name" value="EXODEOXYRIBONUCLEASE 7 SMALL SUBUNIT"/>
    <property type="match status" value="1"/>
</dbReference>
<dbReference type="PANTHER" id="PTHR34137:SF1">
    <property type="entry name" value="EXODEOXYRIBONUCLEASE 7 SMALL SUBUNIT"/>
    <property type="match status" value="1"/>
</dbReference>
<dbReference type="Pfam" id="PF02609">
    <property type="entry name" value="Exonuc_VII_S"/>
    <property type="match status" value="1"/>
</dbReference>
<dbReference type="SUPFAM" id="SSF116842">
    <property type="entry name" value="XseB-like"/>
    <property type="match status" value="1"/>
</dbReference>
<comment type="function">
    <text evidence="1">Bidirectionally degrades single-stranded DNA into large acid-insoluble oligonucleotides, which are then degraded further into small acid-soluble oligonucleotides.</text>
</comment>
<comment type="catalytic activity">
    <reaction evidence="1">
        <text>Exonucleolytic cleavage in either 5'- to 3'- or 3'- to 5'-direction to yield nucleoside 5'-phosphates.</text>
        <dbReference type="EC" id="3.1.11.6"/>
    </reaction>
</comment>
<comment type="subunit">
    <text evidence="1">Heterooligomer composed of large and small subunits.</text>
</comment>
<comment type="subcellular location">
    <subcellularLocation>
        <location evidence="1">Cytoplasm</location>
    </subcellularLocation>
</comment>
<comment type="similarity">
    <text evidence="1">Belongs to the XseB family.</text>
</comment>
<protein>
    <recommendedName>
        <fullName evidence="1">Exodeoxyribonuclease 7 small subunit</fullName>
        <ecNumber evidence="1">3.1.11.6</ecNumber>
    </recommendedName>
    <alternativeName>
        <fullName evidence="1">Exodeoxyribonuclease VII small subunit</fullName>
        <shortName evidence="1">Exonuclease VII small subunit</shortName>
    </alternativeName>
</protein>
<accession>Q051N4</accession>